<accession>B1JJL0</accession>
<sequence length="355" mass="39268">MNELKNDRYLRALLRQPVDMTPVWMMRQAGRYLPEYKATRAIAGDFMSLCKNAELACEVTMQPLRRYPLDAAILFSDILTIPDAMGLGLYFETGEGPRFQSPITCRADVEKLPIPDPEQELGYVMNAVRTIRRELAGSVPLIGFSGSPWTLATYMVEGGSSKAFTKLKKMMYAEPQTLHLLLDKLADSVILYLNAQIKAGAQSVMIFDTWGGVLTGRDYHEFSLNYMHKIVDGLIRENEGRRVPVTLFTKGGGPWLEAMAATGCDALGLDWTTDIADARRRVGDKVALQGNMDPSVLYAPPARIEQEVSTILASFGQGEGHVFNLGHGIHQDVPPAHAGAFVNAVHALSRPYHQK</sequence>
<dbReference type="EC" id="4.1.1.37" evidence="1"/>
<dbReference type="EMBL" id="CP000950">
    <property type="protein sequence ID" value="ACA66661.1"/>
    <property type="molecule type" value="Genomic_DNA"/>
</dbReference>
<dbReference type="RefSeq" id="WP_002210686.1">
    <property type="nucleotide sequence ID" value="NZ_CP009792.1"/>
</dbReference>
<dbReference type="SMR" id="B1JJL0"/>
<dbReference type="GeneID" id="57974983"/>
<dbReference type="KEGG" id="ypy:YPK_0351"/>
<dbReference type="PATRIC" id="fig|502800.11.peg.955"/>
<dbReference type="UniPathway" id="UPA00251">
    <property type="reaction ID" value="UER00321"/>
</dbReference>
<dbReference type="GO" id="GO:0005829">
    <property type="term" value="C:cytosol"/>
    <property type="evidence" value="ECO:0007669"/>
    <property type="project" value="TreeGrafter"/>
</dbReference>
<dbReference type="GO" id="GO:0004853">
    <property type="term" value="F:uroporphyrinogen decarboxylase activity"/>
    <property type="evidence" value="ECO:0007669"/>
    <property type="project" value="UniProtKB-UniRule"/>
</dbReference>
<dbReference type="GO" id="GO:0019353">
    <property type="term" value="P:protoporphyrinogen IX biosynthetic process from glutamate"/>
    <property type="evidence" value="ECO:0007669"/>
    <property type="project" value="TreeGrafter"/>
</dbReference>
<dbReference type="CDD" id="cd00717">
    <property type="entry name" value="URO-D"/>
    <property type="match status" value="1"/>
</dbReference>
<dbReference type="FunFam" id="3.20.20.210:FF:000001">
    <property type="entry name" value="Uroporphyrinogen decarboxylase"/>
    <property type="match status" value="1"/>
</dbReference>
<dbReference type="Gene3D" id="3.20.20.210">
    <property type="match status" value="1"/>
</dbReference>
<dbReference type="HAMAP" id="MF_00218">
    <property type="entry name" value="URO_D"/>
    <property type="match status" value="1"/>
</dbReference>
<dbReference type="InterPro" id="IPR038071">
    <property type="entry name" value="UROD/MetE-like_sf"/>
</dbReference>
<dbReference type="InterPro" id="IPR006361">
    <property type="entry name" value="Uroporphyrinogen_deCO2ase_HemE"/>
</dbReference>
<dbReference type="InterPro" id="IPR000257">
    <property type="entry name" value="Uroporphyrinogen_deCOase"/>
</dbReference>
<dbReference type="NCBIfam" id="TIGR01464">
    <property type="entry name" value="hemE"/>
    <property type="match status" value="1"/>
</dbReference>
<dbReference type="PANTHER" id="PTHR21091">
    <property type="entry name" value="METHYLTETRAHYDROFOLATE:HOMOCYSTEINE METHYLTRANSFERASE RELATED"/>
    <property type="match status" value="1"/>
</dbReference>
<dbReference type="PANTHER" id="PTHR21091:SF169">
    <property type="entry name" value="UROPORPHYRINOGEN DECARBOXYLASE"/>
    <property type="match status" value="1"/>
</dbReference>
<dbReference type="Pfam" id="PF01208">
    <property type="entry name" value="URO-D"/>
    <property type="match status" value="1"/>
</dbReference>
<dbReference type="SUPFAM" id="SSF51726">
    <property type="entry name" value="UROD/MetE-like"/>
    <property type="match status" value="1"/>
</dbReference>
<dbReference type="PROSITE" id="PS00906">
    <property type="entry name" value="UROD_1"/>
    <property type="match status" value="1"/>
</dbReference>
<dbReference type="PROSITE" id="PS00907">
    <property type="entry name" value="UROD_2"/>
    <property type="match status" value="1"/>
</dbReference>
<keyword id="KW-0963">Cytoplasm</keyword>
<keyword id="KW-0210">Decarboxylase</keyword>
<keyword id="KW-0456">Lyase</keyword>
<keyword id="KW-0627">Porphyrin biosynthesis</keyword>
<gene>
    <name evidence="1" type="primary">hemE</name>
    <name type="ordered locus">YPK_0351</name>
</gene>
<evidence type="ECO:0000255" key="1">
    <source>
        <dbReference type="HAMAP-Rule" id="MF_00218"/>
    </source>
</evidence>
<feature type="chain" id="PRO_1000100031" description="Uroporphyrinogen decarboxylase">
    <location>
        <begin position="1"/>
        <end position="355"/>
    </location>
</feature>
<feature type="binding site" evidence="1">
    <location>
        <begin position="27"/>
        <end position="31"/>
    </location>
    <ligand>
        <name>substrate</name>
    </ligand>
</feature>
<feature type="binding site" evidence="1">
    <location>
        <position position="77"/>
    </location>
    <ligand>
        <name>substrate</name>
    </ligand>
</feature>
<feature type="binding site" evidence="1">
    <location>
        <position position="154"/>
    </location>
    <ligand>
        <name>substrate</name>
    </ligand>
</feature>
<feature type="binding site" evidence="1">
    <location>
        <position position="209"/>
    </location>
    <ligand>
        <name>substrate</name>
    </ligand>
</feature>
<feature type="binding site" evidence="1">
    <location>
        <position position="327"/>
    </location>
    <ligand>
        <name>substrate</name>
    </ligand>
</feature>
<feature type="site" description="Transition state stabilizer" evidence="1">
    <location>
        <position position="77"/>
    </location>
</feature>
<reference key="1">
    <citation type="submission" date="2008-02" db="EMBL/GenBank/DDBJ databases">
        <title>Complete sequence of Yersinia pseudotuberculosis YPIII.</title>
        <authorList>
            <consortium name="US DOE Joint Genome Institute"/>
            <person name="Copeland A."/>
            <person name="Lucas S."/>
            <person name="Lapidus A."/>
            <person name="Glavina del Rio T."/>
            <person name="Dalin E."/>
            <person name="Tice H."/>
            <person name="Bruce D."/>
            <person name="Goodwin L."/>
            <person name="Pitluck S."/>
            <person name="Munk A.C."/>
            <person name="Brettin T."/>
            <person name="Detter J.C."/>
            <person name="Han C."/>
            <person name="Tapia R."/>
            <person name="Schmutz J."/>
            <person name="Larimer F."/>
            <person name="Land M."/>
            <person name="Hauser L."/>
            <person name="Challacombe J.F."/>
            <person name="Green L."/>
            <person name="Lindler L.E."/>
            <person name="Nikolich M.P."/>
            <person name="Richardson P."/>
        </authorList>
    </citation>
    <scope>NUCLEOTIDE SEQUENCE [LARGE SCALE GENOMIC DNA]</scope>
    <source>
        <strain>YPIII</strain>
    </source>
</reference>
<protein>
    <recommendedName>
        <fullName evidence="1">Uroporphyrinogen decarboxylase</fullName>
        <shortName evidence="1">UPD</shortName>
        <shortName evidence="1">URO-D</shortName>
        <ecNumber evidence="1">4.1.1.37</ecNumber>
    </recommendedName>
</protein>
<comment type="function">
    <text evidence="1">Catalyzes the decarboxylation of four acetate groups of uroporphyrinogen-III to yield coproporphyrinogen-III.</text>
</comment>
<comment type="catalytic activity">
    <reaction evidence="1">
        <text>uroporphyrinogen III + 4 H(+) = coproporphyrinogen III + 4 CO2</text>
        <dbReference type="Rhea" id="RHEA:19865"/>
        <dbReference type="ChEBI" id="CHEBI:15378"/>
        <dbReference type="ChEBI" id="CHEBI:16526"/>
        <dbReference type="ChEBI" id="CHEBI:57308"/>
        <dbReference type="ChEBI" id="CHEBI:57309"/>
        <dbReference type="EC" id="4.1.1.37"/>
    </reaction>
</comment>
<comment type="pathway">
    <text evidence="1">Porphyrin-containing compound metabolism; protoporphyrin-IX biosynthesis; coproporphyrinogen-III from 5-aminolevulinate: step 4/4.</text>
</comment>
<comment type="subunit">
    <text evidence="1">Homodimer.</text>
</comment>
<comment type="subcellular location">
    <subcellularLocation>
        <location evidence="1">Cytoplasm</location>
    </subcellularLocation>
</comment>
<comment type="similarity">
    <text evidence="1">Belongs to the uroporphyrinogen decarboxylase family.</text>
</comment>
<organism>
    <name type="scientific">Yersinia pseudotuberculosis serotype O:3 (strain YPIII)</name>
    <dbReference type="NCBI Taxonomy" id="502800"/>
    <lineage>
        <taxon>Bacteria</taxon>
        <taxon>Pseudomonadati</taxon>
        <taxon>Pseudomonadota</taxon>
        <taxon>Gammaproteobacteria</taxon>
        <taxon>Enterobacterales</taxon>
        <taxon>Yersiniaceae</taxon>
        <taxon>Yersinia</taxon>
    </lineage>
</organism>
<name>DCUP_YERPY</name>
<proteinExistence type="inferred from homology"/>